<keyword id="KW-0963">Cytoplasm</keyword>
<keyword id="KW-0255">Endonuclease</keyword>
<keyword id="KW-0378">Hydrolase</keyword>
<keyword id="KW-0460">Magnesium</keyword>
<keyword id="KW-0479">Metal-binding</keyword>
<keyword id="KW-0507">mRNA processing</keyword>
<keyword id="KW-0540">Nuclease</keyword>
<keyword id="KW-0694">RNA-binding</keyword>
<keyword id="KW-0698">rRNA processing</keyword>
<keyword id="KW-0699">rRNA-binding</keyword>
<keyword id="KW-0819">tRNA processing</keyword>
<sequence length="229" mass="25905">MNQWEELQESVGFDFKDVELLKQAFTHSSYVNEHRRENVKDNERLEFLGDAVLELTVSNYLFNKYPDMAEGHMTKMRAAIVCEPSLVEFAEAVHFSKYVRLGKGEEKAGGRTRPALLADVFESFIGALYLDNGIDKVVTFLERVIFPKIDAGAYLQTVDYKTQLQEIVQRDRDVLIEYDILGETGPAHNKAFDAQVIVNGQVLGKGSGRTKKQAEQSAAQFAINQLTHR</sequence>
<feature type="chain" id="PRO_1000202839" description="Ribonuclease 3">
    <location>
        <begin position="1"/>
        <end position="229"/>
    </location>
</feature>
<feature type="domain" description="RNase III" evidence="1">
    <location>
        <begin position="4"/>
        <end position="133"/>
    </location>
</feature>
<feature type="domain" description="DRBM" evidence="1">
    <location>
        <begin position="159"/>
        <end position="228"/>
    </location>
</feature>
<feature type="active site" evidence="1">
    <location>
        <position position="50"/>
    </location>
</feature>
<feature type="active site" evidence="1">
    <location>
        <position position="122"/>
    </location>
</feature>
<feature type="binding site" evidence="1">
    <location>
        <position position="46"/>
    </location>
    <ligand>
        <name>Mg(2+)</name>
        <dbReference type="ChEBI" id="CHEBI:18420"/>
    </ligand>
</feature>
<feature type="binding site" evidence="1">
    <location>
        <position position="119"/>
    </location>
    <ligand>
        <name>Mg(2+)</name>
        <dbReference type="ChEBI" id="CHEBI:18420"/>
    </ligand>
</feature>
<feature type="binding site" evidence="1">
    <location>
        <position position="122"/>
    </location>
    <ligand>
        <name>Mg(2+)</name>
        <dbReference type="ChEBI" id="CHEBI:18420"/>
    </ligand>
</feature>
<reference key="1">
    <citation type="journal article" date="2012" name="BMC Genomics">
        <title>Comparative genomics and transcriptomics of lineages I, II, and III strains of Listeria monocytogenes.</title>
        <authorList>
            <person name="Hain T."/>
            <person name="Ghai R."/>
            <person name="Billion A."/>
            <person name="Kuenne C.T."/>
            <person name="Steinweg C."/>
            <person name="Izar B."/>
            <person name="Mohamed W."/>
            <person name="Mraheil M."/>
            <person name="Domann E."/>
            <person name="Schaffrath S."/>
            <person name="Karst U."/>
            <person name="Goesmann A."/>
            <person name="Oehm S."/>
            <person name="Puhler A."/>
            <person name="Merkl R."/>
            <person name="Vorwerk S."/>
            <person name="Glaser P."/>
            <person name="Garrido P."/>
            <person name="Rusniok C."/>
            <person name="Buchrieser C."/>
            <person name="Goebel W."/>
            <person name="Chakraborty T."/>
        </authorList>
    </citation>
    <scope>NUCLEOTIDE SEQUENCE [LARGE SCALE GENOMIC DNA]</scope>
    <source>
        <strain>CLIP80459</strain>
    </source>
</reference>
<organism>
    <name type="scientific">Listeria monocytogenes serotype 4b (strain CLIP80459)</name>
    <dbReference type="NCBI Taxonomy" id="568819"/>
    <lineage>
        <taxon>Bacteria</taxon>
        <taxon>Bacillati</taxon>
        <taxon>Bacillota</taxon>
        <taxon>Bacilli</taxon>
        <taxon>Bacillales</taxon>
        <taxon>Listeriaceae</taxon>
        <taxon>Listeria</taxon>
    </lineage>
</organism>
<name>RNC_LISMC</name>
<evidence type="ECO:0000255" key="1">
    <source>
        <dbReference type="HAMAP-Rule" id="MF_00104"/>
    </source>
</evidence>
<protein>
    <recommendedName>
        <fullName evidence="1">Ribonuclease 3</fullName>
        <ecNumber evidence="1">3.1.26.3</ecNumber>
    </recommendedName>
    <alternativeName>
        <fullName evidence="1">Ribonuclease III</fullName>
        <shortName evidence="1">RNase III</shortName>
    </alternativeName>
</protein>
<gene>
    <name evidence="1" type="primary">rnc</name>
    <name type="ordered locus">Lm4b_01821</name>
</gene>
<dbReference type="EC" id="3.1.26.3" evidence="1"/>
<dbReference type="EMBL" id="FM242711">
    <property type="protein sequence ID" value="CAS05579.1"/>
    <property type="molecule type" value="Genomic_DNA"/>
</dbReference>
<dbReference type="RefSeq" id="WP_003726332.1">
    <property type="nucleotide sequence ID" value="NC_012488.1"/>
</dbReference>
<dbReference type="SMR" id="C1KWA4"/>
<dbReference type="KEGG" id="lmc:Lm4b_01821"/>
<dbReference type="HOGENOM" id="CLU_000907_1_3_9"/>
<dbReference type="GO" id="GO:0005737">
    <property type="term" value="C:cytoplasm"/>
    <property type="evidence" value="ECO:0007669"/>
    <property type="project" value="UniProtKB-SubCell"/>
</dbReference>
<dbReference type="GO" id="GO:0003725">
    <property type="term" value="F:double-stranded RNA binding"/>
    <property type="evidence" value="ECO:0007669"/>
    <property type="project" value="TreeGrafter"/>
</dbReference>
<dbReference type="GO" id="GO:0046872">
    <property type="term" value="F:metal ion binding"/>
    <property type="evidence" value="ECO:0007669"/>
    <property type="project" value="UniProtKB-KW"/>
</dbReference>
<dbReference type="GO" id="GO:0004525">
    <property type="term" value="F:ribonuclease III activity"/>
    <property type="evidence" value="ECO:0007669"/>
    <property type="project" value="UniProtKB-UniRule"/>
</dbReference>
<dbReference type="GO" id="GO:0019843">
    <property type="term" value="F:rRNA binding"/>
    <property type="evidence" value="ECO:0007669"/>
    <property type="project" value="UniProtKB-KW"/>
</dbReference>
<dbReference type="GO" id="GO:0006397">
    <property type="term" value="P:mRNA processing"/>
    <property type="evidence" value="ECO:0007669"/>
    <property type="project" value="UniProtKB-UniRule"/>
</dbReference>
<dbReference type="GO" id="GO:0010468">
    <property type="term" value="P:regulation of gene expression"/>
    <property type="evidence" value="ECO:0007669"/>
    <property type="project" value="TreeGrafter"/>
</dbReference>
<dbReference type="GO" id="GO:0006364">
    <property type="term" value="P:rRNA processing"/>
    <property type="evidence" value="ECO:0007669"/>
    <property type="project" value="UniProtKB-UniRule"/>
</dbReference>
<dbReference type="GO" id="GO:0008033">
    <property type="term" value="P:tRNA processing"/>
    <property type="evidence" value="ECO:0007669"/>
    <property type="project" value="UniProtKB-KW"/>
</dbReference>
<dbReference type="CDD" id="cd10845">
    <property type="entry name" value="DSRM_RNAse_III_family"/>
    <property type="match status" value="1"/>
</dbReference>
<dbReference type="CDD" id="cd00593">
    <property type="entry name" value="RIBOc"/>
    <property type="match status" value="1"/>
</dbReference>
<dbReference type="FunFam" id="1.10.1520.10:FF:000001">
    <property type="entry name" value="Ribonuclease 3"/>
    <property type="match status" value="1"/>
</dbReference>
<dbReference type="FunFam" id="3.30.160.20:FF:000003">
    <property type="entry name" value="Ribonuclease 3"/>
    <property type="match status" value="1"/>
</dbReference>
<dbReference type="Gene3D" id="3.30.160.20">
    <property type="match status" value="1"/>
</dbReference>
<dbReference type="Gene3D" id="1.10.1520.10">
    <property type="entry name" value="Ribonuclease III domain"/>
    <property type="match status" value="1"/>
</dbReference>
<dbReference type="HAMAP" id="MF_00104">
    <property type="entry name" value="RNase_III"/>
    <property type="match status" value="1"/>
</dbReference>
<dbReference type="InterPro" id="IPR014720">
    <property type="entry name" value="dsRBD_dom"/>
</dbReference>
<dbReference type="InterPro" id="IPR011907">
    <property type="entry name" value="RNase_III"/>
</dbReference>
<dbReference type="InterPro" id="IPR000999">
    <property type="entry name" value="RNase_III_dom"/>
</dbReference>
<dbReference type="InterPro" id="IPR036389">
    <property type="entry name" value="RNase_III_sf"/>
</dbReference>
<dbReference type="NCBIfam" id="TIGR02191">
    <property type="entry name" value="RNaseIII"/>
    <property type="match status" value="1"/>
</dbReference>
<dbReference type="PANTHER" id="PTHR11207:SF0">
    <property type="entry name" value="RIBONUCLEASE 3"/>
    <property type="match status" value="1"/>
</dbReference>
<dbReference type="PANTHER" id="PTHR11207">
    <property type="entry name" value="RIBONUCLEASE III"/>
    <property type="match status" value="1"/>
</dbReference>
<dbReference type="Pfam" id="PF00035">
    <property type="entry name" value="dsrm"/>
    <property type="match status" value="1"/>
</dbReference>
<dbReference type="Pfam" id="PF14622">
    <property type="entry name" value="Ribonucleas_3_3"/>
    <property type="match status" value="1"/>
</dbReference>
<dbReference type="SMART" id="SM00358">
    <property type="entry name" value="DSRM"/>
    <property type="match status" value="1"/>
</dbReference>
<dbReference type="SMART" id="SM00535">
    <property type="entry name" value="RIBOc"/>
    <property type="match status" value="1"/>
</dbReference>
<dbReference type="SUPFAM" id="SSF54768">
    <property type="entry name" value="dsRNA-binding domain-like"/>
    <property type="match status" value="1"/>
</dbReference>
<dbReference type="SUPFAM" id="SSF69065">
    <property type="entry name" value="RNase III domain-like"/>
    <property type="match status" value="1"/>
</dbReference>
<dbReference type="PROSITE" id="PS50137">
    <property type="entry name" value="DS_RBD"/>
    <property type="match status" value="1"/>
</dbReference>
<dbReference type="PROSITE" id="PS00517">
    <property type="entry name" value="RNASE_3_1"/>
    <property type="match status" value="1"/>
</dbReference>
<dbReference type="PROSITE" id="PS50142">
    <property type="entry name" value="RNASE_3_2"/>
    <property type="match status" value="1"/>
</dbReference>
<accession>C1KWA4</accession>
<proteinExistence type="inferred from homology"/>
<comment type="function">
    <text evidence="1">Digests double-stranded RNA. Involved in the processing of primary rRNA transcript to yield the immediate precursors to the large and small rRNAs (23S and 16S). Processes some mRNAs, and tRNAs when they are encoded in the rRNA operon. Processes pre-crRNA and tracrRNA of type II CRISPR loci if present in the organism.</text>
</comment>
<comment type="catalytic activity">
    <reaction evidence="1">
        <text>Endonucleolytic cleavage to 5'-phosphomonoester.</text>
        <dbReference type="EC" id="3.1.26.3"/>
    </reaction>
</comment>
<comment type="cofactor">
    <cofactor evidence="1">
        <name>Mg(2+)</name>
        <dbReference type="ChEBI" id="CHEBI:18420"/>
    </cofactor>
</comment>
<comment type="subunit">
    <text evidence="1">Homodimer.</text>
</comment>
<comment type="subcellular location">
    <subcellularLocation>
        <location evidence="1">Cytoplasm</location>
    </subcellularLocation>
</comment>
<comment type="similarity">
    <text evidence="1">Belongs to the ribonuclease III family.</text>
</comment>